<comment type="function">
    <text evidence="1">IGPS catalyzes the conversion of PRFAR and glutamine to IGP, AICAR and glutamate. The HisF subunit catalyzes the cyclization activity that produces IGP and AICAR from PRFAR using the ammonia provided by the HisH subunit.</text>
</comment>
<comment type="catalytic activity">
    <reaction evidence="1">
        <text>5-[(5-phospho-1-deoxy-D-ribulos-1-ylimino)methylamino]-1-(5-phospho-beta-D-ribosyl)imidazole-4-carboxamide + L-glutamine = D-erythro-1-(imidazol-4-yl)glycerol 3-phosphate + 5-amino-1-(5-phospho-beta-D-ribosyl)imidazole-4-carboxamide + L-glutamate + H(+)</text>
        <dbReference type="Rhea" id="RHEA:24793"/>
        <dbReference type="ChEBI" id="CHEBI:15378"/>
        <dbReference type="ChEBI" id="CHEBI:29985"/>
        <dbReference type="ChEBI" id="CHEBI:58278"/>
        <dbReference type="ChEBI" id="CHEBI:58359"/>
        <dbReference type="ChEBI" id="CHEBI:58475"/>
        <dbReference type="ChEBI" id="CHEBI:58525"/>
        <dbReference type="EC" id="4.3.2.10"/>
    </reaction>
</comment>
<comment type="pathway">
    <text evidence="1">Amino-acid biosynthesis; L-histidine biosynthesis; L-histidine from 5-phospho-alpha-D-ribose 1-diphosphate: step 5/9.</text>
</comment>
<comment type="subunit">
    <text evidence="1">Heterodimer of HisH and HisF.</text>
</comment>
<comment type="subcellular location">
    <subcellularLocation>
        <location evidence="1">Cytoplasm</location>
    </subcellularLocation>
</comment>
<comment type="similarity">
    <text evidence="1">Belongs to the HisA/HisF family.</text>
</comment>
<feature type="chain" id="PRO_0000142133" description="Imidazole glycerol phosphate synthase subunit HisF">
    <location>
        <begin position="1"/>
        <end position="258"/>
    </location>
</feature>
<feature type="active site" evidence="1">
    <location>
        <position position="11"/>
    </location>
</feature>
<feature type="active site" evidence="1">
    <location>
        <position position="130"/>
    </location>
</feature>
<sequence length="258" mass="28791">MLAKRIIPCLDVKSGIVVKGVQFRNHEIVGGILSLAKRYTQEGADELVFYDIEASSNNRLIKKKWVSQIAEIINIPFCVAGGIQTIQDVQSILSSGADKISINSPAISDPYLISRIADRFGVQCVVVGIDSWFNKEESQYYVYQYTGDNTKTIKTSWKTCDWVQKVQALGAGEIVLNVMNQDGMKNGYDLVQLKKIRKICNVPLIASGGAGDYFHFYDVFNEAKVDGALAASVFHNRIIKINQLKKFLMKKGLEIRVC</sequence>
<protein>
    <recommendedName>
        <fullName evidence="1">Imidazole glycerol phosphate synthase subunit HisF</fullName>
        <ecNumber evidence="1">4.3.2.10</ecNumber>
    </recommendedName>
    <alternativeName>
        <fullName evidence="1">IGP synthase cyclase subunit</fullName>
    </alternativeName>
    <alternativeName>
        <fullName evidence="1">IGP synthase subunit HisF</fullName>
    </alternativeName>
    <alternativeName>
        <fullName evidence="1">ImGP synthase subunit HisF</fullName>
        <shortName evidence="1">IGPS subunit HisF</shortName>
    </alternativeName>
</protein>
<name>HIS6_BUCBP</name>
<reference key="1">
    <citation type="journal article" date="2003" name="Proc. Natl. Acad. Sci. U.S.A.">
        <title>Reductive genome evolution in Buchnera aphidicola.</title>
        <authorList>
            <person name="van Ham R.C.H.J."/>
            <person name="Kamerbeek J."/>
            <person name="Palacios C."/>
            <person name="Rausell C."/>
            <person name="Abascal F."/>
            <person name="Bastolla U."/>
            <person name="Fernandez J.M."/>
            <person name="Jimenez L."/>
            <person name="Postigo M."/>
            <person name="Silva F.J."/>
            <person name="Tamames J."/>
            <person name="Viguera E."/>
            <person name="Latorre A."/>
            <person name="Valencia A."/>
            <person name="Moran F."/>
            <person name="Moya A."/>
        </authorList>
    </citation>
    <scope>NUCLEOTIDE SEQUENCE [LARGE SCALE GENOMIC DNA]</scope>
    <source>
        <strain>Bp</strain>
    </source>
</reference>
<gene>
    <name evidence="1" type="primary">hisF</name>
    <name type="ordered locus">bbp_099</name>
</gene>
<proteinExistence type="inferred from homology"/>
<keyword id="KW-0028">Amino-acid biosynthesis</keyword>
<keyword id="KW-0963">Cytoplasm</keyword>
<keyword id="KW-0368">Histidine biosynthesis</keyword>
<keyword id="KW-0456">Lyase</keyword>
<keyword id="KW-1185">Reference proteome</keyword>
<accession>P59521</accession>
<dbReference type="EC" id="4.3.2.10" evidence="1"/>
<dbReference type="EMBL" id="AE016826">
    <property type="protein sequence ID" value="AAO26834.1"/>
    <property type="molecule type" value="Genomic_DNA"/>
</dbReference>
<dbReference type="RefSeq" id="WP_011091235.1">
    <property type="nucleotide sequence ID" value="NC_004545.1"/>
</dbReference>
<dbReference type="SMR" id="P59521"/>
<dbReference type="STRING" id="224915.bbp_099"/>
<dbReference type="KEGG" id="bab:bbp_099"/>
<dbReference type="eggNOG" id="COG0107">
    <property type="taxonomic scope" value="Bacteria"/>
</dbReference>
<dbReference type="HOGENOM" id="CLU_048577_4_0_6"/>
<dbReference type="OrthoDB" id="9781903at2"/>
<dbReference type="UniPathway" id="UPA00031">
    <property type="reaction ID" value="UER00010"/>
</dbReference>
<dbReference type="Proteomes" id="UP000000601">
    <property type="component" value="Chromosome"/>
</dbReference>
<dbReference type="GO" id="GO:0005737">
    <property type="term" value="C:cytoplasm"/>
    <property type="evidence" value="ECO:0007669"/>
    <property type="project" value="UniProtKB-SubCell"/>
</dbReference>
<dbReference type="GO" id="GO:0000107">
    <property type="term" value="F:imidazoleglycerol-phosphate synthase activity"/>
    <property type="evidence" value="ECO:0007669"/>
    <property type="project" value="UniProtKB-UniRule"/>
</dbReference>
<dbReference type="GO" id="GO:0016829">
    <property type="term" value="F:lyase activity"/>
    <property type="evidence" value="ECO:0007669"/>
    <property type="project" value="UniProtKB-KW"/>
</dbReference>
<dbReference type="GO" id="GO:0000105">
    <property type="term" value="P:L-histidine biosynthetic process"/>
    <property type="evidence" value="ECO:0007669"/>
    <property type="project" value="UniProtKB-UniRule"/>
</dbReference>
<dbReference type="CDD" id="cd04731">
    <property type="entry name" value="HisF"/>
    <property type="match status" value="1"/>
</dbReference>
<dbReference type="FunFam" id="3.20.20.70:FF:000006">
    <property type="entry name" value="Imidazole glycerol phosphate synthase subunit HisF"/>
    <property type="match status" value="1"/>
</dbReference>
<dbReference type="Gene3D" id="3.20.20.70">
    <property type="entry name" value="Aldolase class I"/>
    <property type="match status" value="1"/>
</dbReference>
<dbReference type="HAMAP" id="MF_01013">
    <property type="entry name" value="HisF"/>
    <property type="match status" value="1"/>
</dbReference>
<dbReference type="InterPro" id="IPR013785">
    <property type="entry name" value="Aldolase_TIM"/>
</dbReference>
<dbReference type="InterPro" id="IPR006062">
    <property type="entry name" value="His_biosynth"/>
</dbReference>
<dbReference type="InterPro" id="IPR004651">
    <property type="entry name" value="HisF"/>
</dbReference>
<dbReference type="InterPro" id="IPR050064">
    <property type="entry name" value="IGPS_HisA/HisF"/>
</dbReference>
<dbReference type="InterPro" id="IPR011060">
    <property type="entry name" value="RibuloseP-bd_barrel"/>
</dbReference>
<dbReference type="NCBIfam" id="TIGR00735">
    <property type="entry name" value="hisF"/>
    <property type="match status" value="1"/>
</dbReference>
<dbReference type="PANTHER" id="PTHR21235:SF2">
    <property type="entry name" value="IMIDAZOLE GLYCEROL PHOSPHATE SYNTHASE HISHF"/>
    <property type="match status" value="1"/>
</dbReference>
<dbReference type="PANTHER" id="PTHR21235">
    <property type="entry name" value="IMIDAZOLE GLYCEROL PHOSPHATE SYNTHASE SUBUNIT HISF/H IGP SYNTHASE SUBUNIT HISF/H"/>
    <property type="match status" value="1"/>
</dbReference>
<dbReference type="Pfam" id="PF00977">
    <property type="entry name" value="His_biosynth"/>
    <property type="match status" value="1"/>
</dbReference>
<dbReference type="SUPFAM" id="SSF51366">
    <property type="entry name" value="Ribulose-phoshate binding barrel"/>
    <property type="match status" value="1"/>
</dbReference>
<evidence type="ECO:0000255" key="1">
    <source>
        <dbReference type="HAMAP-Rule" id="MF_01013"/>
    </source>
</evidence>
<organism>
    <name type="scientific">Buchnera aphidicola subsp. Baizongia pistaciae (strain Bp)</name>
    <dbReference type="NCBI Taxonomy" id="224915"/>
    <lineage>
        <taxon>Bacteria</taxon>
        <taxon>Pseudomonadati</taxon>
        <taxon>Pseudomonadota</taxon>
        <taxon>Gammaproteobacteria</taxon>
        <taxon>Enterobacterales</taxon>
        <taxon>Erwiniaceae</taxon>
        <taxon>Buchnera</taxon>
    </lineage>
</organism>